<keyword id="KW-0067">ATP-binding</keyword>
<keyword id="KW-0456">Lyase</keyword>
<keyword id="KW-0520">NAD</keyword>
<keyword id="KW-0521">NADP</keyword>
<keyword id="KW-0547">Nucleotide-binding</keyword>
<protein>
    <recommendedName>
        <fullName evidence="1">ADP-dependent (S)-NAD(P)H-hydrate dehydratase</fullName>
        <ecNumber evidence="1">4.2.1.136</ecNumber>
    </recommendedName>
    <alternativeName>
        <fullName evidence="1">ADP-dependent NAD(P)HX dehydratase</fullName>
    </alternativeName>
</protein>
<comment type="function">
    <text evidence="1">Catalyzes the dehydration of the S-form of NAD(P)HX at the expense of ADP, which is converted to AMP. Together with NAD(P)HX epimerase, which catalyzes the epimerization of the S- and R-forms, the enzyme allows the repair of both epimers of NAD(P)HX, a damaged form of NAD(P)H that is a result of enzymatic or heat-dependent hydration.</text>
</comment>
<comment type="catalytic activity">
    <reaction evidence="1">
        <text>(6S)-NADHX + ADP = AMP + phosphate + NADH + H(+)</text>
        <dbReference type="Rhea" id="RHEA:32223"/>
        <dbReference type="ChEBI" id="CHEBI:15378"/>
        <dbReference type="ChEBI" id="CHEBI:43474"/>
        <dbReference type="ChEBI" id="CHEBI:57945"/>
        <dbReference type="ChEBI" id="CHEBI:64074"/>
        <dbReference type="ChEBI" id="CHEBI:456215"/>
        <dbReference type="ChEBI" id="CHEBI:456216"/>
        <dbReference type="EC" id="4.2.1.136"/>
    </reaction>
</comment>
<comment type="catalytic activity">
    <reaction evidence="1">
        <text>(6S)-NADPHX + ADP = AMP + phosphate + NADPH + H(+)</text>
        <dbReference type="Rhea" id="RHEA:32235"/>
        <dbReference type="ChEBI" id="CHEBI:15378"/>
        <dbReference type="ChEBI" id="CHEBI:43474"/>
        <dbReference type="ChEBI" id="CHEBI:57783"/>
        <dbReference type="ChEBI" id="CHEBI:64076"/>
        <dbReference type="ChEBI" id="CHEBI:456215"/>
        <dbReference type="ChEBI" id="CHEBI:456216"/>
        <dbReference type="EC" id="4.2.1.136"/>
    </reaction>
</comment>
<comment type="cofactor">
    <cofactor evidence="1">
        <name>Mg(2+)</name>
        <dbReference type="ChEBI" id="CHEBI:18420"/>
    </cofactor>
</comment>
<comment type="subunit">
    <text evidence="1">Homotetramer.</text>
</comment>
<comment type="similarity">
    <text evidence="1">Belongs to the NnrD/CARKD family.</text>
</comment>
<proteinExistence type="inferred from homology"/>
<organism>
    <name type="scientific">Streptococcus thermophilus</name>
    <dbReference type="NCBI Taxonomy" id="1308"/>
    <lineage>
        <taxon>Bacteria</taxon>
        <taxon>Bacillati</taxon>
        <taxon>Bacillota</taxon>
        <taxon>Bacilli</taxon>
        <taxon>Lactobacillales</taxon>
        <taxon>Streptococcaceae</taxon>
        <taxon>Streptococcus</taxon>
    </lineage>
</organism>
<reference key="1">
    <citation type="journal article" date="1996" name="Mol. Microbiol.">
        <title>Disruption of the gene encoding penicillin-binding protein 2b (pbp2b) causes altered cell morphology and cease in exopolysaccharide production in Streptococcus thermophilus Sfi6.</title>
        <authorList>
            <person name="Stingele F."/>
            <person name="Mollet B."/>
        </authorList>
    </citation>
    <scope>NUCLEOTIDE SEQUENCE [GENOMIC DNA]</scope>
    <source>
        <strain>Sfi6</strain>
    </source>
</reference>
<dbReference type="EC" id="4.2.1.136" evidence="1"/>
<dbReference type="EMBL" id="U58210">
    <property type="protein sequence ID" value="AAC44613.1"/>
    <property type="molecule type" value="Genomic_DNA"/>
</dbReference>
<dbReference type="SMR" id="P96051"/>
<dbReference type="eggNOG" id="COG0063">
    <property type="taxonomic scope" value="Bacteria"/>
</dbReference>
<dbReference type="GO" id="GO:0052855">
    <property type="term" value="F:ADP-dependent NAD(P)H-hydrate dehydratase activity"/>
    <property type="evidence" value="ECO:0007669"/>
    <property type="project" value="UniProtKB-UniRule"/>
</dbReference>
<dbReference type="GO" id="GO:0005524">
    <property type="term" value="F:ATP binding"/>
    <property type="evidence" value="ECO:0007669"/>
    <property type="project" value="UniProtKB-KW"/>
</dbReference>
<dbReference type="GO" id="GO:0052856">
    <property type="term" value="F:NAD(P)HX epimerase activity"/>
    <property type="evidence" value="ECO:0007669"/>
    <property type="project" value="TreeGrafter"/>
</dbReference>
<dbReference type="GO" id="GO:0110051">
    <property type="term" value="P:metabolite repair"/>
    <property type="evidence" value="ECO:0007669"/>
    <property type="project" value="TreeGrafter"/>
</dbReference>
<dbReference type="GO" id="GO:0046496">
    <property type="term" value="P:nicotinamide nucleotide metabolic process"/>
    <property type="evidence" value="ECO:0007669"/>
    <property type="project" value="UniProtKB-UniRule"/>
</dbReference>
<dbReference type="CDD" id="cd01171">
    <property type="entry name" value="YXKO-related"/>
    <property type="match status" value="1"/>
</dbReference>
<dbReference type="Gene3D" id="3.40.1190.20">
    <property type="match status" value="1"/>
</dbReference>
<dbReference type="HAMAP" id="MF_01965">
    <property type="entry name" value="NADHX_dehydratase"/>
    <property type="match status" value="1"/>
</dbReference>
<dbReference type="InterPro" id="IPR017953">
    <property type="entry name" value="Carbohydrate_kinase_pred_CS"/>
</dbReference>
<dbReference type="InterPro" id="IPR000631">
    <property type="entry name" value="CARKD"/>
</dbReference>
<dbReference type="InterPro" id="IPR029056">
    <property type="entry name" value="Ribokinase-like"/>
</dbReference>
<dbReference type="NCBIfam" id="TIGR00196">
    <property type="entry name" value="yjeF_cterm"/>
    <property type="match status" value="1"/>
</dbReference>
<dbReference type="PANTHER" id="PTHR12592:SF0">
    <property type="entry name" value="ATP-DEPENDENT (S)-NAD(P)H-HYDRATE DEHYDRATASE"/>
    <property type="match status" value="1"/>
</dbReference>
<dbReference type="PANTHER" id="PTHR12592">
    <property type="entry name" value="ATP-DEPENDENT (S)-NAD(P)H-HYDRATE DEHYDRATASE FAMILY MEMBER"/>
    <property type="match status" value="1"/>
</dbReference>
<dbReference type="Pfam" id="PF01256">
    <property type="entry name" value="Carb_kinase"/>
    <property type="match status" value="1"/>
</dbReference>
<dbReference type="SUPFAM" id="SSF53613">
    <property type="entry name" value="Ribokinase-like"/>
    <property type="match status" value="1"/>
</dbReference>
<dbReference type="PROSITE" id="PS01049">
    <property type="entry name" value="YJEF_C_1"/>
    <property type="match status" value="1"/>
</dbReference>
<dbReference type="PROSITE" id="PS01050">
    <property type="entry name" value="YJEF_C_2"/>
    <property type="match status" value="1"/>
</dbReference>
<dbReference type="PROSITE" id="PS51383">
    <property type="entry name" value="YJEF_C_3"/>
    <property type="match status" value="1"/>
</dbReference>
<evidence type="ECO:0000255" key="1">
    <source>
        <dbReference type="HAMAP-Rule" id="MF_01965"/>
    </source>
</evidence>
<accession>P96051</accession>
<sequence>MKVDDDLVRQVIRPRLRGSHKGSYGRVLLVGGLYPYGGAIIMAAIACVNSGAGLVTVATDRENIIALHAHLPEAMAFDLRETERFLDKLRAADVILIGSGLGEEETADWALELVLANIRSNQNLVVDGSALNLLAKKNQSSLPKCHLILTPHQKEWERLSGLAISEQSVSNTQRALEEFQSGTILVAKSHKTAVYQGAEVTHLEVGGPYQATGGMGDTLAGMVAGFLAQFASTDSYKAVIVATWLHSAIADNIAENAYVVLPTRISKAIPSWMKKLSL</sequence>
<feature type="chain" id="PRO_0000119050" description="ADP-dependent (S)-NAD(P)H-hydrate dehydratase">
    <location>
        <begin position="1"/>
        <end position="278"/>
    </location>
</feature>
<feature type="domain" description="YjeF C-terminal" evidence="1">
    <location>
        <begin position="4"/>
        <end position="276"/>
    </location>
</feature>
<feature type="binding site" evidence="1">
    <location>
        <position position="39"/>
    </location>
    <ligand>
        <name>(6S)-NADPHX</name>
        <dbReference type="ChEBI" id="CHEBI:64076"/>
    </ligand>
</feature>
<feature type="binding site" evidence="1">
    <location>
        <position position="102"/>
    </location>
    <ligand>
        <name>(6S)-NADPHX</name>
        <dbReference type="ChEBI" id="CHEBI:64076"/>
    </ligand>
</feature>
<feature type="binding site" evidence="1">
    <location>
        <position position="152"/>
    </location>
    <ligand>
        <name>(6S)-NADPHX</name>
        <dbReference type="ChEBI" id="CHEBI:64076"/>
    </ligand>
</feature>
<feature type="binding site" evidence="1">
    <location>
        <position position="216"/>
    </location>
    <ligand>
        <name>AMP</name>
        <dbReference type="ChEBI" id="CHEBI:456215"/>
    </ligand>
</feature>
<feature type="binding site" evidence="1">
    <location>
        <position position="217"/>
    </location>
    <ligand>
        <name>(6S)-NADPHX</name>
        <dbReference type="ChEBI" id="CHEBI:64076"/>
    </ligand>
</feature>
<name>NNRD_STRTR</name>
<gene>
    <name evidence="1" type="primary">nnrD</name>
</gene>